<dbReference type="EMBL" id="AC007018">
    <property type="protein sequence ID" value="AAD29053.1"/>
    <property type="molecule type" value="Genomic_DNA"/>
</dbReference>
<dbReference type="EMBL" id="CP002685">
    <property type="protein sequence ID" value="AEC05897.1"/>
    <property type="molecule type" value="Genomic_DNA"/>
</dbReference>
<dbReference type="PIR" id="C84465">
    <property type="entry name" value="C84465"/>
</dbReference>
<dbReference type="RefSeq" id="NP_001189511.1">
    <molecule id="F4IGA5-2"/>
    <property type="nucleotide sequence ID" value="NM_001202582.1"/>
</dbReference>
<dbReference type="BioGRID" id="460">
    <property type="interactions" value="5"/>
</dbReference>
<dbReference type="FunCoup" id="F4IGA5">
    <property type="interactions" value="1239"/>
</dbReference>
<dbReference type="STRING" id="3702.F4IGA5"/>
<dbReference type="GlyGen" id="F4IGA5">
    <property type="glycosylation" value="2 sites"/>
</dbReference>
<dbReference type="iPTMnet" id="F4IGA5"/>
<dbReference type="PaxDb" id="3702-AT2G05120.1"/>
<dbReference type="ProteomicsDB" id="249209">
    <molecule id="F4IGA5-1"/>
</dbReference>
<dbReference type="EnsemblPlants" id="AT2G05120.2">
    <molecule id="F4IGA5-2"/>
    <property type="protein sequence ID" value="AT2G05120.2"/>
    <property type="gene ID" value="AT2G05120"/>
</dbReference>
<dbReference type="GeneID" id="815060"/>
<dbReference type="Gramene" id="AT2G05120.2">
    <molecule id="F4IGA5-2"/>
    <property type="protein sequence ID" value="AT2G05120.2"/>
    <property type="gene ID" value="AT2G05120"/>
</dbReference>
<dbReference type="KEGG" id="ath:AT2G05120"/>
<dbReference type="Araport" id="AT2G05120"/>
<dbReference type="TAIR" id="AT2G05120">
    <property type="gene designation" value="NUP133"/>
</dbReference>
<dbReference type="eggNOG" id="ENOG502QSRR">
    <property type="taxonomic scope" value="Eukaryota"/>
</dbReference>
<dbReference type="InParanoid" id="F4IGA5"/>
<dbReference type="CD-CODE" id="4299E36E">
    <property type="entry name" value="Nucleolus"/>
</dbReference>
<dbReference type="PRO" id="PR:F4IGA5"/>
<dbReference type="Proteomes" id="UP000006548">
    <property type="component" value="Chromosome 2"/>
</dbReference>
<dbReference type="ExpressionAtlas" id="F4IGA5">
    <property type="expression patterns" value="baseline and differential"/>
</dbReference>
<dbReference type="GO" id="GO:0005643">
    <property type="term" value="C:nuclear pore"/>
    <property type="evidence" value="ECO:0007669"/>
    <property type="project" value="UniProtKB-SubCell"/>
</dbReference>
<dbReference type="GO" id="GO:0017056">
    <property type="term" value="F:structural constituent of nuclear pore"/>
    <property type="evidence" value="ECO:0007669"/>
    <property type="project" value="InterPro"/>
</dbReference>
<dbReference type="GO" id="GO:0051028">
    <property type="term" value="P:mRNA transport"/>
    <property type="evidence" value="ECO:0007669"/>
    <property type="project" value="UniProtKB-KW"/>
</dbReference>
<dbReference type="GO" id="GO:0015031">
    <property type="term" value="P:protein transport"/>
    <property type="evidence" value="ECO:0007669"/>
    <property type="project" value="UniProtKB-KW"/>
</dbReference>
<dbReference type="FunFam" id="1.20.58.1380:FF:000005">
    <property type="entry name" value="Nuclear pore complex protein NUP133"/>
    <property type="match status" value="1"/>
</dbReference>
<dbReference type="Gene3D" id="1.20.58.1380">
    <property type="match status" value="1"/>
</dbReference>
<dbReference type="Gene3D" id="2.130.10.10">
    <property type="entry name" value="YVTN repeat-like/Quinoprotein amine dehydrogenase"/>
    <property type="match status" value="1"/>
</dbReference>
<dbReference type="InterPro" id="IPR007187">
    <property type="entry name" value="Nucleoporin_Nup133/Nup155_C"/>
</dbReference>
<dbReference type="InterPro" id="IPR014908">
    <property type="entry name" value="Nucleoporin_Nup133/Nup155_N"/>
</dbReference>
<dbReference type="InterPro" id="IPR037624">
    <property type="entry name" value="Nup133-like"/>
</dbReference>
<dbReference type="InterPro" id="IPR015943">
    <property type="entry name" value="WD40/YVTN_repeat-like_dom_sf"/>
</dbReference>
<dbReference type="PANTHER" id="PTHR13405">
    <property type="entry name" value="NUCLEAR PORE COMPLEX PROTEIN NUP133"/>
    <property type="match status" value="1"/>
</dbReference>
<dbReference type="PANTHER" id="PTHR13405:SF11">
    <property type="entry name" value="NUCLEAR PORE COMPLEX PROTEIN NUP133"/>
    <property type="match status" value="1"/>
</dbReference>
<dbReference type="Pfam" id="PF03177">
    <property type="entry name" value="Nucleoporin_C"/>
    <property type="match status" value="1"/>
</dbReference>
<dbReference type="Pfam" id="PF08801">
    <property type="entry name" value="Nucleoporin_N"/>
    <property type="match status" value="1"/>
</dbReference>
<dbReference type="SUPFAM" id="SSF117289">
    <property type="entry name" value="Nucleoporin domain"/>
    <property type="match status" value="1"/>
</dbReference>
<proteinExistence type="evidence at protein level"/>
<keyword id="KW-0025">Alternative splicing</keyword>
<keyword id="KW-0509">mRNA transport</keyword>
<keyword id="KW-0906">Nuclear pore complex</keyword>
<keyword id="KW-0539">Nucleus</keyword>
<keyword id="KW-0653">Protein transport</keyword>
<keyword id="KW-1185">Reference proteome</keyword>
<keyword id="KW-0811">Translocation</keyword>
<keyword id="KW-0813">Transport</keyword>
<name>NU133_ARATH</name>
<accession>F4IGA5</accession>
<accession>F4IGA4</accession>
<accession>Q9SJ43</accession>
<feature type="chain" id="PRO_0000431076" description="Nuclear pore complex protein NUP133">
    <location>
        <begin position="1"/>
        <end position="1285"/>
    </location>
</feature>
<feature type="region of interest" description="Disordered" evidence="1">
    <location>
        <begin position="1"/>
        <end position="53"/>
    </location>
</feature>
<feature type="region of interest" description="Disordered" evidence="1">
    <location>
        <begin position="522"/>
        <end position="580"/>
    </location>
</feature>
<feature type="compositionally biased region" description="Polar residues" evidence="1">
    <location>
        <begin position="31"/>
        <end position="41"/>
    </location>
</feature>
<feature type="compositionally biased region" description="Basic and acidic residues" evidence="1">
    <location>
        <begin position="523"/>
        <end position="544"/>
    </location>
</feature>
<feature type="compositionally biased region" description="Basic and acidic residues" evidence="1">
    <location>
        <begin position="553"/>
        <end position="569"/>
    </location>
</feature>
<feature type="splice variant" id="VSP_057124" description="In isoform 2.">
    <location>
        <begin position="197"/>
        <end position="210"/>
    </location>
</feature>
<feature type="splice variant" id="VSP_057125" description="In isoform 2.">
    <location>
        <begin position="925"/>
        <end position="975"/>
    </location>
</feature>
<evidence type="ECO:0000256" key="1">
    <source>
        <dbReference type="SAM" id="MobiDB-lite"/>
    </source>
</evidence>
<evidence type="ECO:0000303" key="2">
    <source>
    </source>
</evidence>
<evidence type="ECO:0000305" key="3"/>
<evidence type="ECO:0000305" key="4">
    <source>
    </source>
</evidence>
<evidence type="ECO:0000312" key="5">
    <source>
        <dbReference type="Araport" id="AT2G05120"/>
    </source>
</evidence>
<evidence type="ECO:0000312" key="6">
    <source>
        <dbReference type="EMBL" id="AAD29053.1"/>
    </source>
</evidence>
<evidence type="ECO:0000312" key="7">
    <source>
        <dbReference type="Proteomes" id="UP000006548"/>
    </source>
</evidence>
<organism evidence="7">
    <name type="scientific">Arabidopsis thaliana</name>
    <name type="common">Mouse-ear cress</name>
    <dbReference type="NCBI Taxonomy" id="3702"/>
    <lineage>
        <taxon>Eukaryota</taxon>
        <taxon>Viridiplantae</taxon>
        <taxon>Streptophyta</taxon>
        <taxon>Embryophyta</taxon>
        <taxon>Tracheophyta</taxon>
        <taxon>Spermatophyta</taxon>
        <taxon>Magnoliopsida</taxon>
        <taxon>eudicotyledons</taxon>
        <taxon>Gunneridae</taxon>
        <taxon>Pentapetalae</taxon>
        <taxon>rosids</taxon>
        <taxon>malvids</taxon>
        <taxon>Brassicales</taxon>
        <taxon>Brassicaceae</taxon>
        <taxon>Camelineae</taxon>
        <taxon>Arabidopsis</taxon>
    </lineage>
</organism>
<reference key="1">
    <citation type="journal article" date="1999" name="Nature">
        <title>Sequence and analysis of chromosome 2 of the plant Arabidopsis thaliana.</title>
        <authorList>
            <person name="Lin X."/>
            <person name="Kaul S."/>
            <person name="Rounsley S.D."/>
            <person name="Shea T.P."/>
            <person name="Benito M.-I."/>
            <person name="Town C.D."/>
            <person name="Fujii C.Y."/>
            <person name="Mason T.M."/>
            <person name="Bowman C.L."/>
            <person name="Barnstead M.E."/>
            <person name="Feldblyum T.V."/>
            <person name="Buell C.R."/>
            <person name="Ketchum K.A."/>
            <person name="Lee J.J."/>
            <person name="Ronning C.M."/>
            <person name="Koo H.L."/>
            <person name="Moffat K.S."/>
            <person name="Cronin L.A."/>
            <person name="Shen M."/>
            <person name="Pai G."/>
            <person name="Van Aken S."/>
            <person name="Umayam L."/>
            <person name="Tallon L.J."/>
            <person name="Gill J.E."/>
            <person name="Adams M.D."/>
            <person name="Carrera A.J."/>
            <person name="Creasy T.H."/>
            <person name="Goodman H.M."/>
            <person name="Somerville C.R."/>
            <person name="Copenhaver G.P."/>
            <person name="Preuss D."/>
            <person name="Nierman W.C."/>
            <person name="White O."/>
            <person name="Eisen J.A."/>
            <person name="Salzberg S.L."/>
            <person name="Fraser C.M."/>
            <person name="Venter J.C."/>
        </authorList>
    </citation>
    <scope>NUCLEOTIDE SEQUENCE [LARGE SCALE GENOMIC DNA]</scope>
    <source>
        <strain>cv. Columbia</strain>
    </source>
</reference>
<reference key="2">
    <citation type="journal article" date="2017" name="Plant J.">
        <title>Araport11: a complete reannotation of the Arabidopsis thaliana reference genome.</title>
        <authorList>
            <person name="Cheng C.Y."/>
            <person name="Krishnakumar V."/>
            <person name="Chan A.P."/>
            <person name="Thibaud-Nissen F."/>
            <person name="Schobel S."/>
            <person name="Town C.D."/>
        </authorList>
    </citation>
    <scope>GENOME REANNOTATION</scope>
    <source>
        <strain>cv. Columbia</strain>
    </source>
</reference>
<reference key="3">
    <citation type="journal article" date="2010" name="Plant Cell">
        <title>Identification and characterization of nuclear pore complex components in Arabidopsis thaliana.</title>
        <authorList>
            <person name="Tamura K."/>
            <person name="Fukao Y."/>
            <person name="Iwamoto M."/>
            <person name="Haraguchi T."/>
            <person name="Hara-Nishimura I."/>
        </authorList>
    </citation>
    <scope>IDENTIFICATION IN THE NUCLEAR PORE COMPLEX BY MASS SPECTROMETRY</scope>
    <scope>SUBCELLULAR LOCATION</scope>
    <scope>NOMENCLATURE</scope>
</reference>
<sequence>MFSPLTKRAKQSSRNEKTPRNRVPPPDSPVTPATQNRNNFISDRPATGTPAPWAPRLSVLARVSPGNNGDKGVDSDQLKPVFVGEFPQLLRDEQSYPGDACVSGGMDKETCLSWFITGSKVFVWSHLTTLPSRKCVVLELPVVVLVNEESGSGLQDGKSWLVNVVSWDTSAGAATRASRSRSPVGVVMCNRKTRAVVYWSDIFSGQEAAPAEKARHLIKRQSNGIRSSRAENSDLNSLITTAVAAAERLCIAIACSSNGELWQFTCSPTGVKSNQVQLNISSSSVSEGYPRSLIWRFSQGLARESCWEFLMLTDCDIHCFTIEPYPDLTVSEVWQHEIVGTDGDSGIKKDIASQKQIWPLDLQVDDQGKVITVLVATICMDRASSSSYTQYSLLTLQHKSEMRFADGREEKVLEKQGPIQVIIPKARVEDKDFLFSMRLRVGGRPPGSAIILSGDGTATVCYCHGSSTRLYKFDLPYDAGKVLDASVLSSTDEHEYGAWTVLTEKAGVWAIPEKAVVLGGVEPPERSLSRKNSSNERSTRDETRVTPYGVDRTAGRENSDIQNIEDKGNPKMGFTRQTARDEESEALLGQLFEGFLLSGKVDGSLEKLSQSGAFDRDGEANVFARKSKSIVDTLAKHWTTTRGAEIVAMTVISSQLVEKQQKHENFLHFLALSKCHEELCSKQRHSLQIILENGEKLAAMIQLRELQNMINQNRSARFGSPQAGSEDQVSCALWDLIQFVGERARRNTVLLMDRDNAEVFYSKVSELEEVFYCLNRQLEYIIRADQPLGTQLQRACELSNACVTILQTALDYKNEHQMWYPPLEGLIPWHSQTVVCNGLWCIASFMLHLLTEASRIDISAKSDIYTHLEVLTEVLLEACAGSTFAKLEREEENKGLLNEYWTRRDTIFDSLYRQAKEFMEAEIQGIRERTEATDEDIFRNRCSNLISIAKRHAGYKIMWKICYDLNDTGLLRNLMHEGVGPQGGFSYFVFQQLYDMKQFSKLLRLGEEFQDELLIFLKRHSDLVWLHQVFLHQFSSASDTLHTLALSQDEESMTTVEERTGPEPEDVQPTFADRKRFLNLSKIAYVADKDADSESKVKRIEADLNLLKLQEEITKALPNGEARNRLFRPEELIETCLNIQGRWTAIKAFEVFAWTSSSFRENHRSLLEECWRNAADQDDWDRHHQASTNEGWSEEETLQNLRNTALFQASKRCYGPTRVNTFDGDFAQVLPLRRENPEDSTSSVEDVLMSHKDFAEAGKLMLTAIMLGCVEEEGIVAEEFSSPME</sequence>
<comment type="subunit">
    <text evidence="4">Part of the nuclear pore complex (NPC). The NPC has an eight-fold symmetrical structure comprising a central transport channel and two rings, the cytoplasmic and nuclear rings, to which eight filaments are attached. The cytoplasmic filaments have loose ends, while the nuclear filaments are joined in a distal ring, forming a nuclear basket. NPCs are highly dynamic in configuration and composition, and can be devided in 3 subcomplexes, the NUP62 subcomplex, the NUP107-160 subcomplex and the NUP93 subcomplex, containing approximately 30 different nucleoporin proteins.</text>
</comment>
<comment type="subcellular location">
    <subcellularLocation>
        <location evidence="4">Nucleus envelope</location>
    </subcellularLocation>
    <subcellularLocation>
        <location evidence="4">Nucleus</location>
        <location evidence="4">Nuclear pore complex</location>
    </subcellularLocation>
</comment>
<comment type="alternative products">
    <event type="alternative splicing"/>
    <isoform>
        <id>F4IGA5-1</id>
        <name>1</name>
        <sequence type="displayed"/>
    </isoform>
    <isoform>
        <id>F4IGA5-2</id>
        <name>2</name>
        <sequence type="described" ref="VSP_057124 VSP_057125"/>
    </isoform>
</comment>
<comment type="miscellaneous">
    <molecule>Isoform 2</molecule>
    <text evidence="3">Derived from proteomic data.</text>
</comment>
<comment type="similarity">
    <text evidence="3">Belongs to the nucleoporin Nup133 family.</text>
</comment>
<protein>
    <recommendedName>
        <fullName evidence="2">Nuclear pore complex protein NUP133</fullName>
    </recommendedName>
    <alternativeName>
        <fullName evidence="2">Nucleoporin 133</fullName>
    </alternativeName>
    <alternativeName>
        <fullName>Nucleoporin Nup155-like</fullName>
    </alternativeName>
</protein>
<gene>
    <name evidence="2" type="primary">NUP133</name>
    <name evidence="5" type="ordered locus">At2g05120</name>
    <name evidence="6" type="ORF">F5G3.2</name>
</gene>